<sequence length="113" mass="13590">MNIMEIEKTNRMNALFEFYAALLTDKQMNYIELYYADDYSLAEIADEFGVSRQAVYDNIKRTEKILETYEMKLHMYSDYVVRSEIFDDMIAHYPHDEYLQEKISILTSIDNRE</sequence>
<name>Y1018_STRPC</name>
<feature type="chain" id="PRO_1000012545" description="UPF0122 protein MGAS9429_Spy1018">
    <location>
        <begin position="1"/>
        <end position="113"/>
    </location>
</feature>
<accession>Q1JLL4</accession>
<dbReference type="EMBL" id="CP000259">
    <property type="protein sequence ID" value="ABF32205.1"/>
    <property type="molecule type" value="Genomic_DNA"/>
</dbReference>
<dbReference type="SMR" id="Q1JLL4"/>
<dbReference type="KEGG" id="spk:MGAS9429_Spy1018"/>
<dbReference type="HOGENOM" id="CLU_129218_1_1_9"/>
<dbReference type="Proteomes" id="UP000002433">
    <property type="component" value="Chromosome"/>
</dbReference>
<dbReference type="Gene3D" id="1.10.10.10">
    <property type="entry name" value="Winged helix-like DNA-binding domain superfamily/Winged helix DNA-binding domain"/>
    <property type="match status" value="1"/>
</dbReference>
<dbReference type="HAMAP" id="MF_00245">
    <property type="entry name" value="UPF0122"/>
    <property type="match status" value="1"/>
</dbReference>
<dbReference type="InterPro" id="IPR013324">
    <property type="entry name" value="RNA_pol_sigma_r3/r4-like"/>
</dbReference>
<dbReference type="InterPro" id="IPR007394">
    <property type="entry name" value="UPF0122"/>
</dbReference>
<dbReference type="InterPro" id="IPR054831">
    <property type="entry name" value="UPF0122_fam_protein"/>
</dbReference>
<dbReference type="InterPro" id="IPR036388">
    <property type="entry name" value="WH-like_DNA-bd_sf"/>
</dbReference>
<dbReference type="NCBIfam" id="NF001066">
    <property type="entry name" value="PRK00118.1-1"/>
    <property type="match status" value="1"/>
</dbReference>
<dbReference type="NCBIfam" id="NF001068">
    <property type="entry name" value="PRK00118.1-4"/>
    <property type="match status" value="1"/>
</dbReference>
<dbReference type="NCBIfam" id="NF001070">
    <property type="entry name" value="PRK00118.1-6"/>
    <property type="match status" value="1"/>
</dbReference>
<dbReference type="NCBIfam" id="NF045758">
    <property type="entry name" value="YlxM"/>
    <property type="match status" value="1"/>
</dbReference>
<dbReference type="PANTHER" id="PTHR40083">
    <property type="entry name" value="UPF0122 PROTEIN CBO2450/CLC_2298"/>
    <property type="match status" value="1"/>
</dbReference>
<dbReference type="PANTHER" id="PTHR40083:SF1">
    <property type="entry name" value="UPF0122 PROTEIN YLXM"/>
    <property type="match status" value="1"/>
</dbReference>
<dbReference type="Pfam" id="PF04297">
    <property type="entry name" value="UPF0122"/>
    <property type="match status" value="1"/>
</dbReference>
<dbReference type="SUPFAM" id="SSF88659">
    <property type="entry name" value="Sigma3 and sigma4 domains of RNA polymerase sigma factors"/>
    <property type="match status" value="1"/>
</dbReference>
<comment type="function">
    <text evidence="1">Might take part in the signal recognition particle (SRP) pathway. This is inferred from the conservation of its genetic proximity to ftsY/ffh. May be a regulatory protein.</text>
</comment>
<comment type="similarity">
    <text evidence="1">Belongs to the UPF0122 family.</text>
</comment>
<evidence type="ECO:0000255" key="1">
    <source>
        <dbReference type="HAMAP-Rule" id="MF_00245"/>
    </source>
</evidence>
<organism>
    <name type="scientific">Streptococcus pyogenes serotype M12 (strain MGAS9429)</name>
    <dbReference type="NCBI Taxonomy" id="370551"/>
    <lineage>
        <taxon>Bacteria</taxon>
        <taxon>Bacillati</taxon>
        <taxon>Bacillota</taxon>
        <taxon>Bacilli</taxon>
        <taxon>Lactobacillales</taxon>
        <taxon>Streptococcaceae</taxon>
        <taxon>Streptococcus</taxon>
    </lineage>
</organism>
<gene>
    <name type="ordered locus">MGAS9429_Spy1018</name>
</gene>
<protein>
    <recommendedName>
        <fullName evidence="1">UPF0122 protein MGAS9429_Spy1018</fullName>
    </recommendedName>
</protein>
<reference key="1">
    <citation type="journal article" date="2006" name="Proc. Natl. Acad. Sci. U.S.A.">
        <title>Molecular genetic anatomy of inter- and intraserotype variation in the human bacterial pathogen group A Streptococcus.</title>
        <authorList>
            <person name="Beres S.B."/>
            <person name="Richter E.W."/>
            <person name="Nagiec M.J."/>
            <person name="Sumby P."/>
            <person name="Porcella S.F."/>
            <person name="DeLeo F.R."/>
            <person name="Musser J.M."/>
        </authorList>
    </citation>
    <scope>NUCLEOTIDE SEQUENCE [LARGE SCALE GENOMIC DNA]</scope>
    <source>
        <strain>MGAS9429</strain>
    </source>
</reference>
<proteinExistence type="inferred from homology"/>